<evidence type="ECO:0000255" key="1">
    <source>
        <dbReference type="HAMAP-Rule" id="MF_00172"/>
    </source>
</evidence>
<name>METE_SYNJB</name>
<reference key="1">
    <citation type="journal article" date="2007" name="ISME J.">
        <title>Population level functional diversity in a microbial community revealed by comparative genomic and metagenomic analyses.</title>
        <authorList>
            <person name="Bhaya D."/>
            <person name="Grossman A.R."/>
            <person name="Steunou A.-S."/>
            <person name="Khuri N."/>
            <person name="Cohan F.M."/>
            <person name="Hamamura N."/>
            <person name="Melendrez M.C."/>
            <person name="Bateson M.M."/>
            <person name="Ward D.M."/>
            <person name="Heidelberg J.F."/>
        </authorList>
    </citation>
    <scope>NUCLEOTIDE SEQUENCE [LARGE SCALE GENOMIC DNA]</scope>
    <source>
        <strain>JA-2-3B'a(2-13)</strain>
    </source>
</reference>
<protein>
    <recommendedName>
        <fullName evidence="1">5-methyltetrahydropteroyltriglutamate--homocysteine methyltransferase</fullName>
        <ecNumber evidence="1">2.1.1.14</ecNumber>
    </recommendedName>
    <alternativeName>
        <fullName evidence="1">Cobalamin-independent methionine synthase</fullName>
    </alternativeName>
    <alternativeName>
        <fullName evidence="1">Methionine synthase, vitamin-B12 independent isozyme</fullName>
    </alternativeName>
</protein>
<organism>
    <name type="scientific">Synechococcus sp. (strain JA-2-3B'a(2-13))</name>
    <name type="common">Cyanobacteria bacterium Yellowstone B-Prime</name>
    <dbReference type="NCBI Taxonomy" id="321332"/>
    <lineage>
        <taxon>Bacteria</taxon>
        <taxon>Bacillati</taxon>
        <taxon>Cyanobacteriota</taxon>
        <taxon>Cyanophyceae</taxon>
        <taxon>Synechococcales</taxon>
        <taxon>Synechococcaceae</taxon>
        <taxon>Synechococcus</taxon>
    </lineage>
</organism>
<dbReference type="EC" id="2.1.1.14" evidence="1"/>
<dbReference type="EMBL" id="CP000240">
    <property type="protein sequence ID" value="ABD02841.1"/>
    <property type="molecule type" value="Genomic_DNA"/>
</dbReference>
<dbReference type="RefSeq" id="WP_011433481.1">
    <property type="nucleotide sequence ID" value="NC_007776.1"/>
</dbReference>
<dbReference type="SMR" id="Q2JKE8"/>
<dbReference type="STRING" id="321332.CYB_1886"/>
<dbReference type="KEGG" id="cyb:CYB_1886"/>
<dbReference type="eggNOG" id="COG0620">
    <property type="taxonomic scope" value="Bacteria"/>
</dbReference>
<dbReference type="HOGENOM" id="CLU_013175_0_0_3"/>
<dbReference type="OrthoDB" id="244285at2"/>
<dbReference type="UniPathway" id="UPA00051">
    <property type="reaction ID" value="UER00082"/>
</dbReference>
<dbReference type="Proteomes" id="UP000001938">
    <property type="component" value="Chromosome"/>
</dbReference>
<dbReference type="GO" id="GO:0003871">
    <property type="term" value="F:5-methyltetrahydropteroyltriglutamate-homocysteine S-methyltransferase activity"/>
    <property type="evidence" value="ECO:0007669"/>
    <property type="project" value="UniProtKB-UniRule"/>
</dbReference>
<dbReference type="GO" id="GO:0008270">
    <property type="term" value="F:zinc ion binding"/>
    <property type="evidence" value="ECO:0007669"/>
    <property type="project" value="InterPro"/>
</dbReference>
<dbReference type="GO" id="GO:0009086">
    <property type="term" value="P:methionine biosynthetic process"/>
    <property type="evidence" value="ECO:0007669"/>
    <property type="project" value="UniProtKB-UniRule"/>
</dbReference>
<dbReference type="GO" id="GO:0032259">
    <property type="term" value="P:methylation"/>
    <property type="evidence" value="ECO:0007669"/>
    <property type="project" value="UniProtKB-KW"/>
</dbReference>
<dbReference type="CDD" id="cd03311">
    <property type="entry name" value="CIMS_C_terminal_like"/>
    <property type="match status" value="1"/>
</dbReference>
<dbReference type="CDD" id="cd03312">
    <property type="entry name" value="CIMS_N_terminal_like"/>
    <property type="match status" value="1"/>
</dbReference>
<dbReference type="Gene3D" id="3.20.20.210">
    <property type="match status" value="2"/>
</dbReference>
<dbReference type="HAMAP" id="MF_00172">
    <property type="entry name" value="Meth_synth"/>
    <property type="match status" value="1"/>
</dbReference>
<dbReference type="InterPro" id="IPR013215">
    <property type="entry name" value="Cbl-indep_Met_Synth_N"/>
</dbReference>
<dbReference type="InterPro" id="IPR006276">
    <property type="entry name" value="Cobalamin-indep_Met_synthase"/>
</dbReference>
<dbReference type="InterPro" id="IPR002629">
    <property type="entry name" value="Met_Synth_C/arc"/>
</dbReference>
<dbReference type="InterPro" id="IPR038071">
    <property type="entry name" value="UROD/MetE-like_sf"/>
</dbReference>
<dbReference type="NCBIfam" id="TIGR01371">
    <property type="entry name" value="met_syn_B12ind"/>
    <property type="match status" value="1"/>
</dbReference>
<dbReference type="NCBIfam" id="NF003556">
    <property type="entry name" value="PRK05222.1"/>
    <property type="match status" value="1"/>
</dbReference>
<dbReference type="PANTHER" id="PTHR30519">
    <property type="entry name" value="5-METHYLTETRAHYDROPTEROYLTRIGLUTAMATE--HOMOCYSTEINE METHYLTRANSFERASE"/>
    <property type="match status" value="1"/>
</dbReference>
<dbReference type="Pfam" id="PF08267">
    <property type="entry name" value="Meth_synt_1"/>
    <property type="match status" value="1"/>
</dbReference>
<dbReference type="Pfam" id="PF01717">
    <property type="entry name" value="Meth_synt_2"/>
    <property type="match status" value="1"/>
</dbReference>
<dbReference type="PIRSF" id="PIRSF000382">
    <property type="entry name" value="MeTrfase_B12_ind"/>
    <property type="match status" value="1"/>
</dbReference>
<dbReference type="SUPFAM" id="SSF51726">
    <property type="entry name" value="UROD/MetE-like"/>
    <property type="match status" value="2"/>
</dbReference>
<proteinExistence type="inferred from homology"/>
<sequence>MTAQTMTLGYARMGKRRELKKALEGFWSGALGSEALLATFWDLETQAWQTQLQAGIDHIAVGDQTLYDHVLDWATWLGLIPSRFRGLSGLDRYFAMARGREGLPALEMTKWFDTNYHYLVPEIEPEADPSPNFGDFLERVRRAQGILGERTSPVVLSPVTLLCLSQRSGDLRADLEKLLPLYRDLLQELKQLGIPEVQIHDPILVTSQGSGLREAVEMSYRQLATAGIPVHLVTYFDDLGETYPWVVQLPVAGISLDFTRGHTLDLVRTYGFPADQILGAGVVDARNVWKVQPETVLASLRELQGVAPNLRVQPSASLQFVPHDAALEAQLPEPLRNVLSFAEQKLAEVALLARALNGEDTAAQQAEIQQQWQSFAQFSPPNPQVRQALANLKLQDFERFLPYEQRLSRQVQLPPLPTTTIGSFPQTPEVRQWRAKYKRGEVSQAEYEAAIDAEIAKCIRIQEEIGLDVLVHGEFERTDMVEYFAQKLEGFAFTEHGWVQSYGSRCVRPPILYGDVVRPQPMTVREFQVAQSHTQKPVKGMLTGPVTMLNWSFPRVDIPRREQALQIALALRAEVADLEAAGAVMVQVDEPALREGLPLKKERWPEYLSWAVDAFRLATGGAKPETQIHTHMCYSEFGDIIEHIERLDADVLSIENSRSNNKTLLQIAQAGYRHQVGNGVYDVHSPAVPSVEQILQQLRTGLAHLPVEQTWVNPDCGLKTRRWEEVIPALKNMVAAAHQLGEELLETQPEGLRE</sequence>
<feature type="chain" id="PRO_1000017287" description="5-methyltetrahydropteroyltriglutamate--homocysteine methyltransferase">
    <location>
        <begin position="1"/>
        <end position="754"/>
    </location>
</feature>
<feature type="active site" description="Proton donor" evidence="1">
    <location>
        <position position="684"/>
    </location>
</feature>
<feature type="binding site" evidence="1">
    <location>
        <begin position="17"/>
        <end position="20"/>
    </location>
    <ligand>
        <name>5-methyltetrahydropteroyltri-L-glutamate</name>
        <dbReference type="ChEBI" id="CHEBI:58207"/>
    </ligand>
</feature>
<feature type="binding site" evidence="1">
    <location>
        <position position="110"/>
    </location>
    <ligand>
        <name>5-methyltetrahydropteroyltri-L-glutamate</name>
        <dbReference type="ChEBI" id="CHEBI:58207"/>
    </ligand>
</feature>
<feature type="binding site" evidence="1">
    <location>
        <begin position="421"/>
        <end position="423"/>
    </location>
    <ligand>
        <name>L-homocysteine</name>
        <dbReference type="ChEBI" id="CHEBI:58199"/>
    </ligand>
</feature>
<feature type="binding site" evidence="1">
    <location>
        <begin position="421"/>
        <end position="423"/>
    </location>
    <ligand>
        <name>L-methionine</name>
        <dbReference type="ChEBI" id="CHEBI:57844"/>
    </ligand>
</feature>
<feature type="binding site" evidence="1">
    <location>
        <position position="474"/>
    </location>
    <ligand>
        <name>L-homocysteine</name>
        <dbReference type="ChEBI" id="CHEBI:58199"/>
    </ligand>
</feature>
<feature type="binding site" evidence="1">
    <location>
        <position position="474"/>
    </location>
    <ligand>
        <name>L-methionine</name>
        <dbReference type="ChEBI" id="CHEBI:57844"/>
    </ligand>
</feature>
<feature type="binding site" evidence="1">
    <location>
        <begin position="505"/>
        <end position="506"/>
    </location>
    <ligand>
        <name>5-methyltetrahydropteroyltri-L-glutamate</name>
        <dbReference type="ChEBI" id="CHEBI:58207"/>
    </ligand>
</feature>
<feature type="binding site" evidence="1">
    <location>
        <position position="551"/>
    </location>
    <ligand>
        <name>5-methyltetrahydropteroyltri-L-glutamate</name>
        <dbReference type="ChEBI" id="CHEBI:58207"/>
    </ligand>
</feature>
<feature type="binding site" evidence="1">
    <location>
        <position position="589"/>
    </location>
    <ligand>
        <name>L-homocysteine</name>
        <dbReference type="ChEBI" id="CHEBI:58199"/>
    </ligand>
</feature>
<feature type="binding site" evidence="1">
    <location>
        <position position="589"/>
    </location>
    <ligand>
        <name>L-methionine</name>
        <dbReference type="ChEBI" id="CHEBI:57844"/>
    </ligand>
</feature>
<feature type="binding site" evidence="1">
    <location>
        <position position="595"/>
    </location>
    <ligand>
        <name>5-methyltetrahydropteroyltri-L-glutamate</name>
        <dbReference type="ChEBI" id="CHEBI:58207"/>
    </ligand>
</feature>
<feature type="binding site" evidence="1">
    <location>
        <position position="631"/>
    </location>
    <ligand>
        <name>Zn(2+)</name>
        <dbReference type="ChEBI" id="CHEBI:29105"/>
        <note>catalytic</note>
    </ligand>
</feature>
<feature type="binding site" evidence="1">
    <location>
        <position position="633"/>
    </location>
    <ligand>
        <name>Zn(2+)</name>
        <dbReference type="ChEBI" id="CHEBI:29105"/>
        <note>catalytic</note>
    </ligand>
</feature>
<feature type="binding site" evidence="1">
    <location>
        <position position="655"/>
    </location>
    <ligand>
        <name>Zn(2+)</name>
        <dbReference type="ChEBI" id="CHEBI:29105"/>
        <note>catalytic</note>
    </ligand>
</feature>
<feature type="binding site" evidence="1">
    <location>
        <position position="716"/>
    </location>
    <ligand>
        <name>Zn(2+)</name>
        <dbReference type="ChEBI" id="CHEBI:29105"/>
        <note>catalytic</note>
    </ligand>
</feature>
<accession>Q2JKE8</accession>
<keyword id="KW-0028">Amino-acid biosynthesis</keyword>
<keyword id="KW-0479">Metal-binding</keyword>
<keyword id="KW-0486">Methionine biosynthesis</keyword>
<keyword id="KW-0489">Methyltransferase</keyword>
<keyword id="KW-1185">Reference proteome</keyword>
<keyword id="KW-0677">Repeat</keyword>
<keyword id="KW-0808">Transferase</keyword>
<keyword id="KW-0862">Zinc</keyword>
<gene>
    <name evidence="1" type="primary">metE</name>
    <name type="ordered locus">CYB_1886</name>
</gene>
<comment type="function">
    <text evidence="1">Catalyzes the transfer of a methyl group from 5-methyltetrahydrofolate to homocysteine resulting in methionine formation.</text>
</comment>
<comment type="catalytic activity">
    <reaction evidence="1">
        <text>5-methyltetrahydropteroyltri-L-glutamate + L-homocysteine = tetrahydropteroyltri-L-glutamate + L-methionine</text>
        <dbReference type="Rhea" id="RHEA:21196"/>
        <dbReference type="ChEBI" id="CHEBI:57844"/>
        <dbReference type="ChEBI" id="CHEBI:58140"/>
        <dbReference type="ChEBI" id="CHEBI:58199"/>
        <dbReference type="ChEBI" id="CHEBI:58207"/>
        <dbReference type="EC" id="2.1.1.14"/>
    </reaction>
</comment>
<comment type="cofactor">
    <cofactor evidence="1">
        <name>Zn(2+)</name>
        <dbReference type="ChEBI" id="CHEBI:29105"/>
    </cofactor>
    <text evidence="1">Binds 1 zinc ion per subunit.</text>
</comment>
<comment type="pathway">
    <text evidence="1">Amino-acid biosynthesis; L-methionine biosynthesis via de novo pathway; L-methionine from L-homocysteine (MetE route): step 1/1.</text>
</comment>
<comment type="similarity">
    <text evidence="1">Belongs to the vitamin-B12 independent methionine synthase family.</text>
</comment>